<reference key="1">
    <citation type="journal article" date="2000" name="Nature">
        <title>Sequence and analysis of chromosome 3 of the plant Arabidopsis thaliana.</title>
        <authorList>
            <person name="Salanoubat M."/>
            <person name="Lemcke K."/>
            <person name="Rieger M."/>
            <person name="Ansorge W."/>
            <person name="Unseld M."/>
            <person name="Fartmann B."/>
            <person name="Valle G."/>
            <person name="Bloecker H."/>
            <person name="Perez-Alonso M."/>
            <person name="Obermaier B."/>
            <person name="Delseny M."/>
            <person name="Boutry M."/>
            <person name="Grivell L.A."/>
            <person name="Mache R."/>
            <person name="Puigdomenech P."/>
            <person name="De Simone V."/>
            <person name="Choisne N."/>
            <person name="Artiguenave F."/>
            <person name="Robert C."/>
            <person name="Brottier P."/>
            <person name="Wincker P."/>
            <person name="Cattolico L."/>
            <person name="Weissenbach J."/>
            <person name="Saurin W."/>
            <person name="Quetier F."/>
            <person name="Schaefer M."/>
            <person name="Mueller-Auer S."/>
            <person name="Gabel C."/>
            <person name="Fuchs M."/>
            <person name="Benes V."/>
            <person name="Wurmbach E."/>
            <person name="Drzonek H."/>
            <person name="Erfle H."/>
            <person name="Jordan N."/>
            <person name="Bangert S."/>
            <person name="Wiedelmann R."/>
            <person name="Kranz H."/>
            <person name="Voss H."/>
            <person name="Holland R."/>
            <person name="Brandt P."/>
            <person name="Nyakatura G."/>
            <person name="Vezzi A."/>
            <person name="D'Angelo M."/>
            <person name="Pallavicini A."/>
            <person name="Toppo S."/>
            <person name="Simionati B."/>
            <person name="Conrad A."/>
            <person name="Hornischer K."/>
            <person name="Kauer G."/>
            <person name="Loehnert T.-H."/>
            <person name="Nordsiek G."/>
            <person name="Reichelt J."/>
            <person name="Scharfe M."/>
            <person name="Schoen O."/>
            <person name="Bargues M."/>
            <person name="Terol J."/>
            <person name="Climent J."/>
            <person name="Navarro P."/>
            <person name="Collado C."/>
            <person name="Perez-Perez A."/>
            <person name="Ottenwaelder B."/>
            <person name="Duchemin D."/>
            <person name="Cooke R."/>
            <person name="Laudie M."/>
            <person name="Berger-Llauro C."/>
            <person name="Purnelle B."/>
            <person name="Masuy D."/>
            <person name="de Haan M."/>
            <person name="Maarse A.C."/>
            <person name="Alcaraz J.-P."/>
            <person name="Cottet A."/>
            <person name="Casacuberta E."/>
            <person name="Monfort A."/>
            <person name="Argiriou A."/>
            <person name="Flores M."/>
            <person name="Liguori R."/>
            <person name="Vitale D."/>
            <person name="Mannhaupt G."/>
            <person name="Haase D."/>
            <person name="Schoof H."/>
            <person name="Rudd S."/>
            <person name="Zaccaria P."/>
            <person name="Mewes H.-W."/>
            <person name="Mayer K.F.X."/>
            <person name="Kaul S."/>
            <person name="Town C.D."/>
            <person name="Koo H.L."/>
            <person name="Tallon L.J."/>
            <person name="Jenkins J."/>
            <person name="Rooney T."/>
            <person name="Rizzo M."/>
            <person name="Walts A."/>
            <person name="Utterback T."/>
            <person name="Fujii C.Y."/>
            <person name="Shea T.P."/>
            <person name="Creasy T.H."/>
            <person name="Haas B."/>
            <person name="Maiti R."/>
            <person name="Wu D."/>
            <person name="Peterson J."/>
            <person name="Van Aken S."/>
            <person name="Pai G."/>
            <person name="Militscher J."/>
            <person name="Sellers P."/>
            <person name="Gill J.E."/>
            <person name="Feldblyum T.V."/>
            <person name="Preuss D."/>
            <person name="Lin X."/>
            <person name="Nierman W.C."/>
            <person name="Salzberg S.L."/>
            <person name="White O."/>
            <person name="Venter J.C."/>
            <person name="Fraser C.M."/>
            <person name="Kaneko T."/>
            <person name="Nakamura Y."/>
            <person name="Sato S."/>
            <person name="Kato T."/>
            <person name="Asamizu E."/>
            <person name="Sasamoto S."/>
            <person name="Kimura T."/>
            <person name="Idesawa K."/>
            <person name="Kawashima K."/>
            <person name="Kishida Y."/>
            <person name="Kiyokawa C."/>
            <person name="Kohara M."/>
            <person name="Matsumoto M."/>
            <person name="Matsuno A."/>
            <person name="Muraki A."/>
            <person name="Nakayama S."/>
            <person name="Nakazaki N."/>
            <person name="Shinpo S."/>
            <person name="Takeuchi C."/>
            <person name="Wada T."/>
            <person name="Watanabe A."/>
            <person name="Yamada M."/>
            <person name="Yasuda M."/>
            <person name="Tabata S."/>
        </authorList>
    </citation>
    <scope>NUCLEOTIDE SEQUENCE [LARGE SCALE GENOMIC DNA]</scope>
    <source>
        <strain>cv. Columbia</strain>
    </source>
</reference>
<reference key="2">
    <citation type="journal article" date="2017" name="Plant J.">
        <title>Araport11: a complete reannotation of the Arabidopsis thaliana reference genome.</title>
        <authorList>
            <person name="Cheng C.Y."/>
            <person name="Krishnakumar V."/>
            <person name="Chan A.P."/>
            <person name="Thibaud-Nissen F."/>
            <person name="Schobel S."/>
            <person name="Town C.D."/>
        </authorList>
    </citation>
    <scope>GENOME REANNOTATION</scope>
    <source>
        <strain>cv. Columbia</strain>
    </source>
</reference>
<reference key="3">
    <citation type="submission" date="2006-07" db="EMBL/GenBank/DDBJ databases">
        <title>Large-scale analysis of RIKEN Arabidopsis full-length (RAFL) cDNAs.</title>
        <authorList>
            <person name="Totoki Y."/>
            <person name="Seki M."/>
            <person name="Ishida J."/>
            <person name="Nakajima M."/>
            <person name="Enju A."/>
            <person name="Kamiya A."/>
            <person name="Narusaka M."/>
            <person name="Shin-i T."/>
            <person name="Nakagawa M."/>
            <person name="Sakamoto N."/>
            <person name="Oishi K."/>
            <person name="Kohara Y."/>
            <person name="Kobayashi M."/>
            <person name="Toyoda A."/>
            <person name="Sakaki Y."/>
            <person name="Sakurai T."/>
            <person name="Iida K."/>
            <person name="Akiyama K."/>
            <person name="Satou M."/>
            <person name="Toyoda T."/>
            <person name="Konagaya A."/>
            <person name="Carninci P."/>
            <person name="Kawai J."/>
            <person name="Hayashizaki Y."/>
            <person name="Shinozaki K."/>
        </authorList>
    </citation>
    <scope>NUCLEOTIDE SEQUENCE [LARGE SCALE MRNA]</scope>
    <source>
        <strain>cv. Columbia</strain>
    </source>
</reference>
<reference key="4">
    <citation type="journal article" date="2005" name="Plant J.">
        <title>AtATG18a is required for the formation of autophagosomes during nutrient stress and senescence in Arabidopsis thaliana.</title>
        <authorList>
            <person name="Xiong Y."/>
            <person name="Contento A.L."/>
            <person name="Bassham D.C."/>
        </authorList>
    </citation>
    <scope>GENE FAMILY</scope>
    <scope>INDUCTION</scope>
    <scope>TISSUE SPECIFICITY</scope>
</reference>
<protein>
    <recommendedName>
        <fullName>Autophagy-related protein 18d</fullName>
        <shortName>AtATG18d</shortName>
    </recommendedName>
</protein>
<comment type="function">
    <text evidence="1">The PI(3,5)P2 regulatory complex regulates both the synthesis and turnover of phosphatidylinositol 3,5-bisphosphate (PtdIns(3,5)P2). Required for autophagy (By similarity).</text>
</comment>
<comment type="subunit">
    <text evidence="1">Component of the PI(3,5)P2 regulatory complex at least composed of ATG18, SAC/FIG4, FAB1 and VAC14.</text>
</comment>
<comment type="subcellular location">
    <subcellularLocation>
        <location evidence="1">Preautophagosomal structure membrane</location>
        <topology evidence="1">Peripheral membrane protein</topology>
    </subcellularLocation>
    <subcellularLocation>
        <location evidence="1">Vacuole membrane</location>
        <topology evidence="1">Peripheral membrane protein</topology>
    </subcellularLocation>
    <text evidence="1">Peripheral membrane protein of pre-autophagosomal structure (PAS) and vacuole.</text>
</comment>
<comment type="tissue specificity">
    <text evidence="3">Expressed in roots, stems, flowers and leaves.</text>
</comment>
<comment type="induction">
    <text evidence="3">Down-regulated during senescence.</text>
</comment>
<comment type="domain">
    <text evidence="1">The first protein part may form a beta-propeller domain involved in specific binding to phosphatidylinositol 3,5-bisphosphate (PIP2), leading to the association of the protein to the membrane.</text>
</comment>
<comment type="similarity">
    <text evidence="4">Belongs to the WD repeat PROPPIN family.</text>
</comment>
<comment type="sequence caution" evidence="4">
    <conflict type="erroneous gene model prediction">
        <sequence resource="EMBL-CDS" id="CAB88047"/>
    </conflict>
</comment>
<evidence type="ECO:0000250" key="1"/>
<evidence type="ECO:0000256" key="2">
    <source>
        <dbReference type="SAM" id="MobiDB-lite"/>
    </source>
</evidence>
<evidence type="ECO:0000269" key="3">
    <source>
    </source>
</evidence>
<evidence type="ECO:0000305" key="4"/>
<sequence length="391" mass="43888">MDPRRNFQPGGYDSRNTFTSGSFGPPDFGESDEAELVSVSWNQDYSCFAAGTSHGFRIYNCEPFKETFRRELKDGGFKIVEMLFRSNILALVGGGPNSQYPSNKVLIWDDHQGRCISEFTFRSEIRAVKLRRDRIVVVLEHKIYVYNFMDLRLLHQIENMANPRGLCCLSHHMNTSVLACPGIRRGEVRVEHFGLNMVQIINAHDSNIACMTLTLDGLLLATASTKGTLIRIFNTMDGTRLQEVRRGVDRADIYSIALSPNVQWLAVSSDKGTVHIFSLRVRVIGEDAYSTEHETSSNSLQPLVSPASGANPGSSLSFLRGVLPKYFSSEWSFSQFHVPEVTQYFAAFGAQNTIAIIGLDGSFYRCNFDPVNGGEMTQLEHFHFLKQDSPR</sequence>
<proteinExistence type="evidence at transcript level"/>
<feature type="chain" id="PRO_0000421882" description="Autophagy-related protein 18d">
    <location>
        <begin position="1"/>
        <end position="391"/>
    </location>
</feature>
<feature type="repeat" description="WD 1">
    <location>
        <begin position="31"/>
        <end position="69"/>
    </location>
</feature>
<feature type="repeat" description="WD 2">
    <location>
        <begin position="74"/>
        <end position="118"/>
    </location>
</feature>
<feature type="repeat" description="WD 3">
    <location>
        <begin position="203"/>
        <end position="243"/>
    </location>
</feature>
<feature type="repeat" description="WD 4">
    <location>
        <begin position="248"/>
        <end position="287"/>
    </location>
</feature>
<feature type="region of interest" description="Disordered" evidence="2">
    <location>
        <begin position="1"/>
        <end position="24"/>
    </location>
</feature>
<gene>
    <name type="primary">ATG18D</name>
    <name type="ordered locus">At3g56440</name>
    <name type="ORF">T5P19_90</name>
</gene>
<organism>
    <name type="scientific">Arabidopsis thaliana</name>
    <name type="common">Mouse-ear cress</name>
    <dbReference type="NCBI Taxonomy" id="3702"/>
    <lineage>
        <taxon>Eukaryota</taxon>
        <taxon>Viridiplantae</taxon>
        <taxon>Streptophyta</taxon>
        <taxon>Embryophyta</taxon>
        <taxon>Tracheophyta</taxon>
        <taxon>Spermatophyta</taxon>
        <taxon>Magnoliopsida</taxon>
        <taxon>eudicotyledons</taxon>
        <taxon>Gunneridae</taxon>
        <taxon>Pentapetalae</taxon>
        <taxon>rosids</taxon>
        <taxon>malvids</taxon>
        <taxon>Brassicales</taxon>
        <taxon>Brassicaceae</taxon>
        <taxon>Camelineae</taxon>
        <taxon>Arabidopsis</taxon>
    </lineage>
</organism>
<dbReference type="EMBL" id="AL163972">
    <property type="protein sequence ID" value="CAB88047.1"/>
    <property type="status" value="ALT_SEQ"/>
    <property type="molecule type" value="Genomic_DNA"/>
</dbReference>
<dbReference type="EMBL" id="CP002686">
    <property type="protein sequence ID" value="AEE79522.1"/>
    <property type="molecule type" value="Genomic_DNA"/>
</dbReference>
<dbReference type="EMBL" id="AK229064">
    <property type="protein sequence ID" value="BAF00946.1"/>
    <property type="molecule type" value="mRNA"/>
</dbReference>
<dbReference type="PIR" id="T49045">
    <property type="entry name" value="T49045"/>
</dbReference>
<dbReference type="RefSeq" id="NP_191203.2">
    <property type="nucleotide sequence ID" value="NM_115502.4"/>
</dbReference>
<dbReference type="SMR" id="Q0WPK3"/>
<dbReference type="FunCoup" id="Q0WPK3">
    <property type="interactions" value="3840"/>
</dbReference>
<dbReference type="STRING" id="3702.Q0WPK3"/>
<dbReference type="PaxDb" id="3702-AT3G56440.1"/>
<dbReference type="ProteomicsDB" id="246821"/>
<dbReference type="DNASU" id="824811"/>
<dbReference type="EnsemblPlants" id="AT3G56440.1">
    <property type="protein sequence ID" value="AT3G56440.1"/>
    <property type="gene ID" value="AT3G56440"/>
</dbReference>
<dbReference type="GeneID" id="824811"/>
<dbReference type="Gramene" id="AT3G56440.1">
    <property type="protein sequence ID" value="AT3G56440.1"/>
    <property type="gene ID" value="AT3G56440"/>
</dbReference>
<dbReference type="KEGG" id="ath:AT3G56440"/>
<dbReference type="Araport" id="AT3G56440"/>
<dbReference type="TAIR" id="AT3G56440">
    <property type="gene designation" value="ATG18D"/>
</dbReference>
<dbReference type="eggNOG" id="KOG2111">
    <property type="taxonomic scope" value="Eukaryota"/>
</dbReference>
<dbReference type="HOGENOM" id="CLU_025895_2_1_1"/>
<dbReference type="InParanoid" id="Q0WPK3"/>
<dbReference type="OMA" id="CEMLHRT"/>
<dbReference type="PhylomeDB" id="Q0WPK3"/>
<dbReference type="PRO" id="PR:Q0WPK3"/>
<dbReference type="Proteomes" id="UP000006548">
    <property type="component" value="Chromosome 3"/>
</dbReference>
<dbReference type="ExpressionAtlas" id="Q0WPK3">
    <property type="expression patterns" value="baseline and differential"/>
</dbReference>
<dbReference type="GO" id="GO:0034045">
    <property type="term" value="C:phagophore assembly site membrane"/>
    <property type="evidence" value="ECO:0007669"/>
    <property type="project" value="UniProtKB-SubCell"/>
</dbReference>
<dbReference type="GO" id="GO:0005774">
    <property type="term" value="C:vacuolar membrane"/>
    <property type="evidence" value="ECO:0007669"/>
    <property type="project" value="UniProtKB-SubCell"/>
</dbReference>
<dbReference type="GO" id="GO:0006914">
    <property type="term" value="P:autophagy"/>
    <property type="evidence" value="ECO:0007669"/>
    <property type="project" value="UniProtKB-KW"/>
</dbReference>
<dbReference type="GO" id="GO:0015031">
    <property type="term" value="P:protein transport"/>
    <property type="evidence" value="ECO:0007669"/>
    <property type="project" value="UniProtKB-KW"/>
</dbReference>
<dbReference type="FunFam" id="2.130.10.10:FF:001926">
    <property type="entry name" value="Autophagy-related protein 18d"/>
    <property type="match status" value="1"/>
</dbReference>
<dbReference type="Gene3D" id="2.130.10.10">
    <property type="entry name" value="YVTN repeat-like/Quinoprotein amine dehydrogenase"/>
    <property type="match status" value="1"/>
</dbReference>
<dbReference type="InterPro" id="IPR048720">
    <property type="entry name" value="PROPPIN"/>
</dbReference>
<dbReference type="InterPro" id="IPR015943">
    <property type="entry name" value="WD40/YVTN_repeat-like_dom_sf"/>
</dbReference>
<dbReference type="InterPro" id="IPR036322">
    <property type="entry name" value="WD40_repeat_dom_sf"/>
</dbReference>
<dbReference type="InterPro" id="IPR001680">
    <property type="entry name" value="WD40_rpt"/>
</dbReference>
<dbReference type="PANTHER" id="PTHR11227">
    <property type="entry name" value="WD-REPEAT PROTEIN INTERACTING WITH PHOSPHOINOSIDES WIPI -RELATED"/>
    <property type="match status" value="1"/>
</dbReference>
<dbReference type="Pfam" id="PF21032">
    <property type="entry name" value="PROPPIN"/>
    <property type="match status" value="1"/>
</dbReference>
<dbReference type="SMART" id="SM00320">
    <property type="entry name" value="WD40"/>
    <property type="match status" value="4"/>
</dbReference>
<dbReference type="SUPFAM" id="SSF50978">
    <property type="entry name" value="WD40 repeat-like"/>
    <property type="match status" value="1"/>
</dbReference>
<accession>Q0WPK3</accession>
<accession>Q9LXZ6</accession>
<keyword id="KW-0072">Autophagy</keyword>
<keyword id="KW-0472">Membrane</keyword>
<keyword id="KW-0653">Protein transport</keyword>
<keyword id="KW-1185">Reference proteome</keyword>
<keyword id="KW-0677">Repeat</keyword>
<keyword id="KW-0813">Transport</keyword>
<keyword id="KW-0926">Vacuole</keyword>
<keyword id="KW-0853">WD repeat</keyword>
<name>AT18D_ARATH</name>